<name>Y1521_STAA9</name>
<evidence type="ECO:0000255" key="1">
    <source>
        <dbReference type="HAMAP-Rule" id="MF_00760"/>
    </source>
</evidence>
<comment type="similarity">
    <text evidence="1">Belongs to the UPF0302 family.</text>
</comment>
<reference key="1">
    <citation type="submission" date="2007-05" db="EMBL/GenBank/DDBJ databases">
        <title>Complete sequence of chromosome of Staphylococcus aureus subsp. aureus JH9.</title>
        <authorList>
            <consortium name="US DOE Joint Genome Institute"/>
            <person name="Copeland A."/>
            <person name="Lucas S."/>
            <person name="Lapidus A."/>
            <person name="Barry K."/>
            <person name="Detter J.C."/>
            <person name="Glavina del Rio T."/>
            <person name="Hammon N."/>
            <person name="Israni S."/>
            <person name="Pitluck S."/>
            <person name="Chain P."/>
            <person name="Malfatti S."/>
            <person name="Shin M."/>
            <person name="Vergez L."/>
            <person name="Schmutz J."/>
            <person name="Larimer F."/>
            <person name="Land M."/>
            <person name="Hauser L."/>
            <person name="Kyrpides N."/>
            <person name="Kim E."/>
            <person name="Tomasz A."/>
            <person name="Richardson P."/>
        </authorList>
    </citation>
    <scope>NUCLEOTIDE SEQUENCE [LARGE SCALE GENOMIC DNA]</scope>
    <source>
        <strain>JH9</strain>
    </source>
</reference>
<accession>A5ISZ2</accession>
<dbReference type="EMBL" id="CP000703">
    <property type="protein sequence ID" value="ABQ49315.1"/>
    <property type="molecule type" value="Genomic_DNA"/>
</dbReference>
<dbReference type="RefSeq" id="WP_000005212.1">
    <property type="nucleotide sequence ID" value="NC_009487.1"/>
</dbReference>
<dbReference type="SMR" id="A5ISZ2"/>
<dbReference type="KEGG" id="saj:SaurJH9_1521"/>
<dbReference type="HOGENOM" id="CLU_122408_0_0_9"/>
<dbReference type="Gene3D" id="3.40.1530.30">
    <property type="entry name" value="Uncharacterised family UPF0302, N-terminal domain"/>
    <property type="match status" value="1"/>
</dbReference>
<dbReference type="HAMAP" id="MF_00760">
    <property type="entry name" value="UPF0302"/>
    <property type="match status" value="1"/>
</dbReference>
<dbReference type="InterPro" id="IPR014957">
    <property type="entry name" value="IDEAL_dom"/>
</dbReference>
<dbReference type="InterPro" id="IPR011188">
    <property type="entry name" value="UPF0302"/>
</dbReference>
<dbReference type="InterPro" id="IPR014963">
    <property type="entry name" value="UPF0302_N"/>
</dbReference>
<dbReference type="InterPro" id="IPR038091">
    <property type="entry name" value="UPF0302_N_sf"/>
</dbReference>
<dbReference type="Pfam" id="PF08858">
    <property type="entry name" value="IDEAL"/>
    <property type="match status" value="1"/>
</dbReference>
<dbReference type="Pfam" id="PF08864">
    <property type="entry name" value="UPF0302"/>
    <property type="match status" value="1"/>
</dbReference>
<dbReference type="PIRSF" id="PIRSF007165">
    <property type="entry name" value="UCP007165"/>
    <property type="match status" value="1"/>
</dbReference>
<dbReference type="SMART" id="SM00914">
    <property type="entry name" value="IDEAL"/>
    <property type="match status" value="1"/>
</dbReference>
<protein>
    <recommendedName>
        <fullName evidence="1">UPF0302 protein SaurJH9_1521</fullName>
    </recommendedName>
</protein>
<organism>
    <name type="scientific">Staphylococcus aureus (strain JH9)</name>
    <dbReference type="NCBI Taxonomy" id="359786"/>
    <lineage>
        <taxon>Bacteria</taxon>
        <taxon>Bacillati</taxon>
        <taxon>Bacillota</taxon>
        <taxon>Bacilli</taxon>
        <taxon>Bacillales</taxon>
        <taxon>Staphylococcaceae</taxon>
        <taxon>Staphylococcus</taxon>
    </lineage>
</organism>
<gene>
    <name type="ordered locus">SaurJH9_1521</name>
</gene>
<sequence length="191" mass="22564">MSETLNQIKESFIEYLLFQYRFKSRIAVWVLNYIKVNEAKLANIHFVDTKINHHETLEIAEVGSHASAIQFTKRNIKLMNTNEIFDYIANHNCAFDIQIHFANVSKREQRLDDLIVAQLTESPSYQTYLHDLNSMAIDRHKHALLIDYLLHNIDLSLQMNEKQRFYQLTQILNTLKLVNKHNQFEDLADDD</sequence>
<proteinExistence type="inferred from homology"/>
<feature type="chain" id="PRO_1000083526" description="UPF0302 protein SaurJH9_1521">
    <location>
        <begin position="1"/>
        <end position="191"/>
    </location>
</feature>